<feature type="chain" id="PRO_0000252896" description="Fluoride-specific ion channel FluC">
    <location>
        <begin position="1"/>
        <end position="128"/>
    </location>
</feature>
<feature type="transmembrane region" description="Helical" evidence="1">
    <location>
        <begin position="5"/>
        <end position="25"/>
    </location>
</feature>
<feature type="transmembrane region" description="Helical" evidence="1">
    <location>
        <begin position="32"/>
        <end position="52"/>
    </location>
</feature>
<feature type="transmembrane region" description="Helical" evidence="1">
    <location>
        <begin position="70"/>
        <end position="90"/>
    </location>
</feature>
<feature type="transmembrane region" description="Helical" evidence="1">
    <location>
        <begin position="106"/>
        <end position="126"/>
    </location>
</feature>
<feature type="binding site" evidence="1">
    <location>
        <position position="77"/>
    </location>
    <ligand>
        <name>Na(+)</name>
        <dbReference type="ChEBI" id="CHEBI:29101"/>
        <note>structural</note>
    </ligand>
</feature>
<feature type="binding site" evidence="1">
    <location>
        <position position="80"/>
    </location>
    <ligand>
        <name>Na(+)</name>
        <dbReference type="ChEBI" id="CHEBI:29101"/>
        <note>structural</note>
    </ligand>
</feature>
<dbReference type="EMBL" id="AP007255">
    <property type="protein sequence ID" value="BAE52210.1"/>
    <property type="molecule type" value="Genomic_DNA"/>
</dbReference>
<dbReference type="RefSeq" id="WP_011385766.1">
    <property type="nucleotide sequence ID" value="NC_007626.1"/>
</dbReference>
<dbReference type="SMR" id="Q2W1R5"/>
<dbReference type="STRING" id="342108.amb3406"/>
<dbReference type="KEGG" id="mag:amb3406"/>
<dbReference type="HOGENOM" id="CLU_114342_3_0_5"/>
<dbReference type="OrthoDB" id="9806299at2"/>
<dbReference type="Proteomes" id="UP000007058">
    <property type="component" value="Chromosome"/>
</dbReference>
<dbReference type="GO" id="GO:0005886">
    <property type="term" value="C:plasma membrane"/>
    <property type="evidence" value="ECO:0007669"/>
    <property type="project" value="UniProtKB-SubCell"/>
</dbReference>
<dbReference type="GO" id="GO:0062054">
    <property type="term" value="F:fluoride channel activity"/>
    <property type="evidence" value="ECO:0007669"/>
    <property type="project" value="UniProtKB-UniRule"/>
</dbReference>
<dbReference type="GO" id="GO:0046872">
    <property type="term" value="F:metal ion binding"/>
    <property type="evidence" value="ECO:0007669"/>
    <property type="project" value="UniProtKB-KW"/>
</dbReference>
<dbReference type="GO" id="GO:0140114">
    <property type="term" value="P:cellular detoxification of fluoride"/>
    <property type="evidence" value="ECO:0007669"/>
    <property type="project" value="UniProtKB-UniRule"/>
</dbReference>
<dbReference type="HAMAP" id="MF_00454">
    <property type="entry name" value="FluC"/>
    <property type="match status" value="1"/>
</dbReference>
<dbReference type="InterPro" id="IPR003691">
    <property type="entry name" value="FluC"/>
</dbReference>
<dbReference type="NCBIfam" id="TIGR00494">
    <property type="entry name" value="crcB"/>
    <property type="match status" value="1"/>
</dbReference>
<dbReference type="NCBIfam" id="NF010802">
    <property type="entry name" value="PRK14206.1"/>
    <property type="match status" value="1"/>
</dbReference>
<dbReference type="PANTHER" id="PTHR28259">
    <property type="entry name" value="FLUORIDE EXPORT PROTEIN 1-RELATED"/>
    <property type="match status" value="1"/>
</dbReference>
<dbReference type="PANTHER" id="PTHR28259:SF1">
    <property type="entry name" value="FLUORIDE EXPORT PROTEIN 1-RELATED"/>
    <property type="match status" value="1"/>
</dbReference>
<dbReference type="Pfam" id="PF02537">
    <property type="entry name" value="CRCB"/>
    <property type="match status" value="1"/>
</dbReference>
<reference key="1">
    <citation type="journal article" date="2005" name="DNA Res.">
        <title>Complete genome sequence of the facultative anaerobic magnetotactic bacterium Magnetospirillum sp. strain AMB-1.</title>
        <authorList>
            <person name="Matsunaga T."/>
            <person name="Okamura Y."/>
            <person name="Fukuda Y."/>
            <person name="Wahyudi A.T."/>
            <person name="Murase Y."/>
            <person name="Takeyama H."/>
        </authorList>
    </citation>
    <scope>NUCLEOTIDE SEQUENCE [LARGE SCALE GENOMIC DNA]</scope>
    <source>
        <strain>ATCC 700264 / AMB-1</strain>
    </source>
</reference>
<accession>Q2W1R5</accession>
<evidence type="ECO:0000255" key="1">
    <source>
        <dbReference type="HAMAP-Rule" id="MF_00454"/>
    </source>
</evidence>
<keyword id="KW-0997">Cell inner membrane</keyword>
<keyword id="KW-1003">Cell membrane</keyword>
<keyword id="KW-0407">Ion channel</keyword>
<keyword id="KW-0406">Ion transport</keyword>
<keyword id="KW-0472">Membrane</keyword>
<keyword id="KW-0479">Metal-binding</keyword>
<keyword id="KW-0915">Sodium</keyword>
<keyword id="KW-0812">Transmembrane</keyword>
<keyword id="KW-1133">Transmembrane helix</keyword>
<keyword id="KW-0813">Transport</keyword>
<sequence length="128" mass="13348">MLTYALVALGSAIGGTLRYWLSMVIAEASAGTFPWATLVINVAGSAAIGLFATLTSVDGRVFVPSEWRTFFMVGICGGFTTFSSFSLQTLALAQDGDWLAAGLNVVGSVALCLLAVWLGHVAATIINR</sequence>
<proteinExistence type="inferred from homology"/>
<gene>
    <name evidence="1" type="primary">fluC</name>
    <name evidence="1" type="synonym">crcB</name>
    <name type="ordered locus">amb3406</name>
</gene>
<name>FLUC_PARM1</name>
<organism>
    <name type="scientific">Paramagnetospirillum magneticum (strain ATCC 700264 / AMB-1)</name>
    <name type="common">Magnetospirillum magneticum</name>
    <dbReference type="NCBI Taxonomy" id="342108"/>
    <lineage>
        <taxon>Bacteria</taxon>
        <taxon>Pseudomonadati</taxon>
        <taxon>Pseudomonadota</taxon>
        <taxon>Alphaproteobacteria</taxon>
        <taxon>Rhodospirillales</taxon>
        <taxon>Magnetospirillaceae</taxon>
        <taxon>Paramagnetospirillum</taxon>
    </lineage>
</organism>
<comment type="function">
    <text evidence="1">Fluoride-specific ion channel. Important for reducing fluoride concentration in the cell, thus reducing its toxicity.</text>
</comment>
<comment type="catalytic activity">
    <reaction evidence="1">
        <text>fluoride(in) = fluoride(out)</text>
        <dbReference type="Rhea" id="RHEA:76159"/>
        <dbReference type="ChEBI" id="CHEBI:17051"/>
    </reaction>
    <physiologicalReaction direction="left-to-right" evidence="1">
        <dbReference type="Rhea" id="RHEA:76160"/>
    </physiologicalReaction>
</comment>
<comment type="activity regulation">
    <text evidence="1">Na(+) is not transported, but it plays an essential structural role and its presence is essential for fluoride channel function.</text>
</comment>
<comment type="subcellular location">
    <subcellularLocation>
        <location evidence="1">Cell inner membrane</location>
        <topology evidence="1">Multi-pass membrane protein</topology>
    </subcellularLocation>
</comment>
<comment type="similarity">
    <text evidence="1">Belongs to the fluoride channel Fluc/FEX (TC 1.A.43) family.</text>
</comment>
<protein>
    <recommendedName>
        <fullName evidence="1">Fluoride-specific ion channel FluC</fullName>
    </recommendedName>
</protein>